<gene>
    <name type="primary">purB</name>
    <name type="ordered locus">TM_1095</name>
</gene>
<feature type="chain" id="PRO_0000137886" description="Adenylosuccinate lyase">
    <location>
        <begin position="1"/>
        <end position="431"/>
    </location>
</feature>
<feature type="active site" description="Proton donor/acceptor" evidence="2">
    <location>
        <position position="141"/>
    </location>
</feature>
<feature type="active site" description="Proton donor/acceptor" evidence="1">
    <location>
        <position position="262"/>
    </location>
</feature>
<feature type="binding site" evidence="1">
    <location>
        <begin position="4"/>
        <end position="5"/>
    </location>
    <ligand>
        <name>N(6)-(1,2-dicarboxyethyl)-AMP</name>
        <dbReference type="ChEBI" id="CHEBI:57567"/>
    </ligand>
</feature>
<feature type="binding site" evidence="1">
    <location>
        <begin position="67"/>
        <end position="69"/>
    </location>
    <ligand>
        <name>N(6)-(1,2-dicarboxyethyl)-AMP</name>
        <dbReference type="ChEBI" id="CHEBI:57567"/>
    </ligand>
</feature>
<feature type="binding site" evidence="1">
    <location>
        <begin position="93"/>
        <end position="94"/>
    </location>
    <ligand>
        <name>N(6)-(1,2-dicarboxyethyl)-AMP</name>
        <dbReference type="ChEBI" id="CHEBI:57567"/>
    </ligand>
</feature>
<feature type="binding site" evidence="1">
    <location>
        <position position="212"/>
    </location>
    <ligand>
        <name>N(6)-(1,2-dicarboxyethyl)-AMP</name>
        <dbReference type="ChEBI" id="CHEBI:57567"/>
    </ligand>
</feature>
<feature type="binding site" evidence="1">
    <location>
        <position position="263"/>
    </location>
    <ligand>
        <name>N(6)-(1,2-dicarboxyethyl)-AMP</name>
        <dbReference type="ChEBI" id="CHEBI:57567"/>
    </ligand>
</feature>
<feature type="binding site" evidence="1">
    <location>
        <begin position="268"/>
        <end position="270"/>
    </location>
    <ligand>
        <name>N(6)-(1,2-dicarboxyethyl)-AMP</name>
        <dbReference type="ChEBI" id="CHEBI:57567"/>
    </ligand>
</feature>
<feature type="binding site" evidence="1">
    <location>
        <begin position="307"/>
        <end position="311"/>
    </location>
    <ligand>
        <name>N(6)-(1,2-dicarboxyethyl)-AMP</name>
        <dbReference type="ChEBI" id="CHEBI:57567"/>
    </ligand>
</feature>
<feature type="helix" evidence="4">
    <location>
        <begin position="3"/>
        <end position="5"/>
    </location>
</feature>
<feature type="helix" evidence="4">
    <location>
        <begin position="10"/>
        <end position="13"/>
    </location>
</feature>
<feature type="helix" evidence="4">
    <location>
        <begin position="16"/>
        <end position="36"/>
    </location>
</feature>
<feature type="helix" evidence="4">
    <location>
        <begin position="44"/>
        <end position="51"/>
    </location>
</feature>
<feature type="helix" evidence="4">
    <location>
        <begin position="56"/>
        <end position="66"/>
    </location>
</feature>
<feature type="helix" evidence="4">
    <location>
        <begin position="69"/>
        <end position="81"/>
    </location>
</feature>
<feature type="helix" evidence="4">
    <location>
        <begin position="82"/>
        <end position="87"/>
    </location>
</feature>
<feature type="turn" evidence="4">
    <location>
        <begin position="88"/>
        <end position="91"/>
    </location>
</feature>
<feature type="helix" evidence="4">
    <location>
        <begin position="94"/>
        <end position="130"/>
    </location>
</feature>
<feature type="turn" evidence="4">
    <location>
        <begin position="131"/>
        <end position="133"/>
    </location>
</feature>
<feature type="strand" evidence="4">
    <location>
        <begin position="135"/>
        <end position="140"/>
    </location>
</feature>
<feature type="strand" evidence="4">
    <location>
        <begin position="143"/>
        <end position="149"/>
    </location>
</feature>
<feature type="helix" evidence="4">
    <location>
        <begin position="150"/>
        <end position="174"/>
    </location>
</feature>
<feature type="strand" evidence="4">
    <location>
        <begin position="188"/>
        <end position="190"/>
    </location>
</feature>
<feature type="helix" evidence="4">
    <location>
        <begin position="192"/>
        <end position="201"/>
    </location>
</feature>
<feature type="strand" evidence="4">
    <location>
        <begin position="211"/>
        <end position="213"/>
    </location>
</feature>
<feature type="helix" evidence="4">
    <location>
        <begin position="217"/>
        <end position="243"/>
    </location>
</feature>
<feature type="turn" evidence="4">
    <location>
        <begin position="246"/>
        <end position="248"/>
    </location>
</feature>
<feature type="strand" evidence="4">
    <location>
        <begin position="250"/>
        <end position="252"/>
    </location>
</feature>
<feature type="helix" evidence="4">
    <location>
        <begin position="272"/>
        <end position="286"/>
    </location>
</feature>
<feature type="helix" evidence="4">
    <location>
        <begin position="288"/>
        <end position="293"/>
    </location>
</feature>
<feature type="helix" evidence="4">
    <location>
        <begin position="304"/>
        <end position="333"/>
    </location>
</feature>
<feature type="helix" evidence="4">
    <location>
        <begin position="338"/>
        <end position="345"/>
    </location>
</feature>
<feature type="turn" evidence="4">
    <location>
        <begin position="346"/>
        <end position="350"/>
    </location>
</feature>
<feature type="helix" evidence="4">
    <location>
        <begin position="351"/>
        <end position="353"/>
    </location>
</feature>
<feature type="helix" evidence="4">
    <location>
        <begin position="354"/>
        <end position="363"/>
    </location>
</feature>
<feature type="helix" evidence="4">
    <location>
        <begin position="368"/>
        <end position="383"/>
    </location>
</feature>
<feature type="strand" evidence="4">
    <location>
        <begin position="385"/>
        <end position="387"/>
    </location>
</feature>
<feature type="helix" evidence="4">
    <location>
        <begin position="389"/>
        <end position="394"/>
    </location>
</feature>
<feature type="helix" evidence="4">
    <location>
        <begin position="397"/>
        <end position="400"/>
    </location>
</feature>
<feature type="helix" evidence="4">
    <location>
        <begin position="405"/>
        <end position="410"/>
    </location>
</feature>
<feature type="helix" evidence="4">
    <location>
        <begin position="415"/>
        <end position="418"/>
    </location>
</feature>
<feature type="helix" evidence="4">
    <location>
        <begin position="421"/>
        <end position="426"/>
    </location>
</feature>
<organism>
    <name type="scientific">Thermotoga maritima (strain ATCC 43589 / DSM 3109 / JCM 10099 / NBRC 100826 / MSB8)</name>
    <dbReference type="NCBI Taxonomy" id="243274"/>
    <lineage>
        <taxon>Bacteria</taxon>
        <taxon>Thermotogati</taxon>
        <taxon>Thermotogota</taxon>
        <taxon>Thermotogae</taxon>
        <taxon>Thermotogales</taxon>
        <taxon>Thermotogaceae</taxon>
        <taxon>Thermotoga</taxon>
    </lineage>
</organism>
<comment type="function">
    <text evidence="1">Catalyzes two reactions in de novo purine nucleotide biosynthesis. Catalyzes the breakdown of 5-aminoimidazole- (N-succinylocarboxamide) ribotide (SAICAR or 2-[5-amino-1-(5-phospho-beta-D-ribosyl)imidazole-4-carboxamido]succinate) to 5-aminoimidazole-4-carboxamide ribotide (AICAR or 5-amino-1-(5-phospho-beta-D-ribosyl)imidazole-4-carboxamide) and fumarate, and of adenylosuccinate (ADS or N(6)-(1,2-dicarboxyethyl)-AMP) to adenosine monophosphate (AMP) and fumarate.</text>
</comment>
<comment type="catalytic activity">
    <reaction evidence="1">
        <text>N(6)-(1,2-dicarboxyethyl)-AMP = fumarate + AMP</text>
        <dbReference type="Rhea" id="RHEA:16853"/>
        <dbReference type="ChEBI" id="CHEBI:29806"/>
        <dbReference type="ChEBI" id="CHEBI:57567"/>
        <dbReference type="ChEBI" id="CHEBI:456215"/>
        <dbReference type="EC" id="4.3.2.2"/>
    </reaction>
    <physiologicalReaction direction="left-to-right" evidence="1">
        <dbReference type="Rhea" id="RHEA:16854"/>
    </physiologicalReaction>
</comment>
<comment type="catalytic activity">
    <reaction evidence="1">
        <text>(2S)-2-[5-amino-1-(5-phospho-beta-D-ribosyl)imidazole-4-carboxamido]succinate = 5-amino-1-(5-phospho-beta-D-ribosyl)imidazole-4-carboxamide + fumarate</text>
        <dbReference type="Rhea" id="RHEA:23920"/>
        <dbReference type="ChEBI" id="CHEBI:29806"/>
        <dbReference type="ChEBI" id="CHEBI:58443"/>
        <dbReference type="ChEBI" id="CHEBI:58475"/>
        <dbReference type="EC" id="4.3.2.2"/>
    </reaction>
    <physiologicalReaction direction="left-to-right" evidence="1">
        <dbReference type="Rhea" id="RHEA:23921"/>
    </physiologicalReaction>
</comment>
<comment type="pathway">
    <text>Purine metabolism; AMP biosynthesis via de novo pathway; AMP from IMP: step 2/2.</text>
</comment>
<comment type="pathway">
    <text>Purine metabolism; IMP biosynthesis via de novo pathway; 5-amino-1-(5-phospho-D-ribosyl)imidazole-4-carboxamide from 5-amino-1-(5-phospho-D-ribosyl)imidazole-4-carboxylate: step 2/2.</text>
</comment>
<comment type="subunit">
    <text evidence="2">Homotetramer. Residues from neighboring subunits contribute catalytic and substrate-binding residues to each active site.</text>
</comment>
<comment type="similarity">
    <text evidence="3">Belongs to the lyase 1 family. Adenylosuccinate lyase subfamily.</text>
</comment>
<proteinExistence type="evidence at protein level"/>
<sequence>MVERYSLSPMKDLWTEEAKYRRWLEVELAVTRAYEELGMIPKGVTERIRNNAKIDVELFKKIEEKTNHDVVAFVEGIGSMIGEDSRFFHYGLTSSDVLDTANSLALVEAGKILLESLKEFCDVLWEVANRYKHTPTIGRTHGVHAEPTSFGLKVLGWYSEMKRNVQRLERAIEEVSYGKISGAVGNYANVPPEVEEKALSYLGLKPEPVSTQVVPRDRHAFYLSTLAIVAAGIERIAVEIRHLQRTEVLEVEEPFRKGQRGSSAMPHKKNPITCERLTGLSRMMRAYVDPSLENIALWHERDISHSSVERYVFPDATQTLYYMIVTATNVVRNMKVNEERMKKNIDLTKGLVFSQRVLLKLIEKGLTRKEAYDIVQRNALKTWNSEKHFLEYLLEDEEVKKLVTKEELEELFDISYYLKHVDHIFERFEKE</sequence>
<evidence type="ECO:0000250" key="1">
    <source>
        <dbReference type="UniProtKB" id="P0AB89"/>
    </source>
</evidence>
<evidence type="ECO:0000269" key="2">
    <source>
    </source>
</evidence>
<evidence type="ECO:0000305" key="3"/>
<evidence type="ECO:0007829" key="4">
    <source>
        <dbReference type="PDB" id="1C3C"/>
    </source>
</evidence>
<accession>Q9X0I0</accession>
<reference key="1">
    <citation type="journal article" date="1999" name="Nature">
        <title>Evidence for lateral gene transfer between Archaea and Bacteria from genome sequence of Thermotoga maritima.</title>
        <authorList>
            <person name="Nelson K.E."/>
            <person name="Clayton R.A."/>
            <person name="Gill S.R."/>
            <person name="Gwinn M.L."/>
            <person name="Dodson R.J."/>
            <person name="Haft D.H."/>
            <person name="Hickey E.K."/>
            <person name="Peterson J.D."/>
            <person name="Nelson W.C."/>
            <person name="Ketchum K.A."/>
            <person name="McDonald L.A."/>
            <person name="Utterback T.R."/>
            <person name="Malek J.A."/>
            <person name="Linher K.D."/>
            <person name="Garrett M.M."/>
            <person name="Stewart A.M."/>
            <person name="Cotton M.D."/>
            <person name="Pratt M.S."/>
            <person name="Phillips C.A."/>
            <person name="Richardson D.L."/>
            <person name="Heidelberg J.F."/>
            <person name="Sutton G.G."/>
            <person name="Fleischmann R.D."/>
            <person name="Eisen J.A."/>
            <person name="White O."/>
            <person name="Salzberg S.L."/>
            <person name="Smith H.O."/>
            <person name="Venter J.C."/>
            <person name="Fraser C.M."/>
        </authorList>
    </citation>
    <scope>NUCLEOTIDE SEQUENCE [LARGE SCALE GENOMIC DNA]</scope>
    <source>
        <strain>ATCC 43589 / DSM 3109 / JCM 10099 / NBRC 100826 / MSB8</strain>
    </source>
</reference>
<reference key="2">
    <citation type="journal article" date="2000" name="Structure">
        <title>The structure of adenylosuccinate lyase, an enzyme with dual activity in the de novo purine biosynthetic pathway.</title>
        <authorList>
            <person name="Toth E.A."/>
            <person name="Yeates T.O."/>
        </authorList>
    </citation>
    <scope>X-RAY CRYSTALLOGRAPHY (1.8 ANGSTROMS)</scope>
    <scope>SUBUNIT</scope>
    <scope>ACTIVE SITE</scope>
</reference>
<name>PUR8_THEMA</name>
<keyword id="KW-0002">3D-structure</keyword>
<keyword id="KW-0456">Lyase</keyword>
<keyword id="KW-0658">Purine biosynthesis</keyword>
<keyword id="KW-1185">Reference proteome</keyword>
<dbReference type="EC" id="4.3.2.2" evidence="1"/>
<dbReference type="EMBL" id="AE000512">
    <property type="protein sequence ID" value="AAD36171.1"/>
    <property type="molecule type" value="Genomic_DNA"/>
</dbReference>
<dbReference type="PIR" id="A72294">
    <property type="entry name" value="A72294"/>
</dbReference>
<dbReference type="RefSeq" id="NP_228901.1">
    <property type="nucleotide sequence ID" value="NC_000853.1"/>
</dbReference>
<dbReference type="RefSeq" id="WP_004080360.1">
    <property type="nucleotide sequence ID" value="NC_000853.1"/>
</dbReference>
<dbReference type="PDB" id="1C3C">
    <property type="method" value="X-ray"/>
    <property type="resolution" value="1.80 A"/>
    <property type="chains" value="A/B=2-430"/>
</dbReference>
<dbReference type="PDB" id="1C3U">
    <property type="method" value="X-ray"/>
    <property type="resolution" value="2.30 A"/>
    <property type="chains" value="A/B=1-431"/>
</dbReference>
<dbReference type="PDBsum" id="1C3C"/>
<dbReference type="PDBsum" id="1C3U"/>
<dbReference type="SMR" id="Q9X0I0"/>
<dbReference type="FunCoup" id="Q9X0I0">
    <property type="interactions" value="382"/>
</dbReference>
<dbReference type="STRING" id="243274.TM_1095"/>
<dbReference type="PaxDb" id="243274-THEMA_08870"/>
<dbReference type="EnsemblBacteria" id="AAD36171">
    <property type="protein sequence ID" value="AAD36171"/>
    <property type="gene ID" value="TM_1095"/>
</dbReference>
<dbReference type="KEGG" id="tma:TM1095"/>
<dbReference type="KEGG" id="tmi:THEMA_08870"/>
<dbReference type="KEGG" id="tmm:Tmari_1101"/>
<dbReference type="KEGG" id="tmw:THMA_1118"/>
<dbReference type="eggNOG" id="COG0015">
    <property type="taxonomic scope" value="Bacteria"/>
</dbReference>
<dbReference type="InParanoid" id="Q9X0I0"/>
<dbReference type="OrthoDB" id="9768878at2"/>
<dbReference type="BRENDA" id="4.3.2.2">
    <property type="organism ID" value="6331"/>
</dbReference>
<dbReference type="UniPathway" id="UPA00074">
    <property type="reaction ID" value="UER00132"/>
</dbReference>
<dbReference type="UniPathway" id="UPA00075">
    <property type="reaction ID" value="UER00336"/>
</dbReference>
<dbReference type="EvolutionaryTrace" id="Q9X0I0"/>
<dbReference type="Proteomes" id="UP000008183">
    <property type="component" value="Chromosome"/>
</dbReference>
<dbReference type="GO" id="GO:0005829">
    <property type="term" value="C:cytosol"/>
    <property type="evidence" value="ECO:0000318"/>
    <property type="project" value="GO_Central"/>
</dbReference>
<dbReference type="GO" id="GO:0070626">
    <property type="term" value="F:(S)-2-(5-amino-1-(5-phospho-D-ribosyl)imidazole-4-carboxamido) succinate lyase (fumarate-forming) activity"/>
    <property type="evidence" value="ECO:0000318"/>
    <property type="project" value="GO_Central"/>
</dbReference>
<dbReference type="GO" id="GO:0004018">
    <property type="term" value="F:N6-(1,2-dicarboxyethyl)AMP AMP-lyase (fumarate-forming) activity"/>
    <property type="evidence" value="ECO:0000318"/>
    <property type="project" value="GO_Central"/>
</dbReference>
<dbReference type="GO" id="GO:0044208">
    <property type="term" value="P:'de novo' AMP biosynthetic process"/>
    <property type="evidence" value="ECO:0000318"/>
    <property type="project" value="GO_Central"/>
</dbReference>
<dbReference type="GO" id="GO:0006189">
    <property type="term" value="P:'de novo' IMP biosynthetic process"/>
    <property type="evidence" value="ECO:0007669"/>
    <property type="project" value="UniProtKB-UniPathway"/>
</dbReference>
<dbReference type="CDD" id="cd01360">
    <property type="entry name" value="Adenylsuccinate_lyase_1"/>
    <property type="match status" value="1"/>
</dbReference>
<dbReference type="FunFam" id="1.10.40.30:FF:000007">
    <property type="entry name" value="Adenylosuccinate lyase"/>
    <property type="match status" value="1"/>
</dbReference>
<dbReference type="FunFam" id="1.20.200.10:FF:000008">
    <property type="entry name" value="Adenylosuccinate lyase"/>
    <property type="match status" value="1"/>
</dbReference>
<dbReference type="Gene3D" id="1.10.40.30">
    <property type="entry name" value="Fumarase/aspartase (C-terminal domain)"/>
    <property type="match status" value="1"/>
</dbReference>
<dbReference type="Gene3D" id="1.20.200.10">
    <property type="entry name" value="Fumarase/aspartase (Central domain)"/>
    <property type="match status" value="1"/>
</dbReference>
<dbReference type="Gene3D" id="1.10.275.10">
    <property type="entry name" value="Fumarase/aspartase (N-terminal domain)"/>
    <property type="match status" value="1"/>
</dbReference>
<dbReference type="InterPro" id="IPR019468">
    <property type="entry name" value="AdenyloSucc_lyase_C"/>
</dbReference>
<dbReference type="InterPro" id="IPR024083">
    <property type="entry name" value="Fumarase/histidase_N"/>
</dbReference>
<dbReference type="InterPro" id="IPR020557">
    <property type="entry name" value="Fumarate_lyase_CS"/>
</dbReference>
<dbReference type="InterPro" id="IPR000362">
    <property type="entry name" value="Fumarate_lyase_fam"/>
</dbReference>
<dbReference type="InterPro" id="IPR022761">
    <property type="entry name" value="Fumarate_lyase_N"/>
</dbReference>
<dbReference type="InterPro" id="IPR008948">
    <property type="entry name" value="L-Aspartase-like"/>
</dbReference>
<dbReference type="InterPro" id="IPR004769">
    <property type="entry name" value="Pur_lyase"/>
</dbReference>
<dbReference type="NCBIfam" id="TIGR00928">
    <property type="entry name" value="purB"/>
    <property type="match status" value="1"/>
</dbReference>
<dbReference type="PANTHER" id="PTHR43172">
    <property type="entry name" value="ADENYLOSUCCINATE LYASE"/>
    <property type="match status" value="1"/>
</dbReference>
<dbReference type="PANTHER" id="PTHR43172:SF1">
    <property type="entry name" value="ADENYLOSUCCINATE LYASE"/>
    <property type="match status" value="1"/>
</dbReference>
<dbReference type="Pfam" id="PF10397">
    <property type="entry name" value="ADSL_C"/>
    <property type="match status" value="1"/>
</dbReference>
<dbReference type="Pfam" id="PF00206">
    <property type="entry name" value="Lyase_1"/>
    <property type="match status" value="1"/>
</dbReference>
<dbReference type="PRINTS" id="PR00145">
    <property type="entry name" value="ARGSUCLYASE"/>
</dbReference>
<dbReference type="PRINTS" id="PR00149">
    <property type="entry name" value="FUMRATELYASE"/>
</dbReference>
<dbReference type="SMART" id="SM00998">
    <property type="entry name" value="ADSL_C"/>
    <property type="match status" value="1"/>
</dbReference>
<dbReference type="SUPFAM" id="SSF48557">
    <property type="entry name" value="L-aspartase-like"/>
    <property type="match status" value="1"/>
</dbReference>
<dbReference type="PROSITE" id="PS00163">
    <property type="entry name" value="FUMARATE_LYASES"/>
    <property type="match status" value="1"/>
</dbReference>
<protein>
    <recommendedName>
        <fullName>Adenylosuccinate lyase</fullName>
        <shortName>ASL</shortName>
        <ecNumber evidence="1">4.3.2.2</ecNumber>
    </recommendedName>
    <alternativeName>
        <fullName>Adenylosuccinase</fullName>
        <shortName>ASase</shortName>
    </alternativeName>
</protein>